<comment type="function">
    <text evidence="1">Catalyzes the interconversion of 2-phosphoglycerate and 3-phosphoglycerate.</text>
</comment>
<comment type="catalytic activity">
    <reaction evidence="1">
        <text>(2R)-2-phosphoglycerate = (2R)-3-phosphoglycerate</text>
        <dbReference type="Rhea" id="RHEA:15901"/>
        <dbReference type="ChEBI" id="CHEBI:58272"/>
        <dbReference type="ChEBI" id="CHEBI:58289"/>
        <dbReference type="EC" id="5.4.2.12"/>
    </reaction>
</comment>
<comment type="cofactor">
    <cofactor evidence="1">
        <name>Mn(2+)</name>
        <dbReference type="ChEBI" id="CHEBI:29035"/>
    </cofactor>
    <text evidence="1">Binds 2 manganese ions per subunit.</text>
</comment>
<comment type="pathway">
    <text evidence="1">Carbohydrate degradation; glycolysis; pyruvate from D-glyceraldehyde 3-phosphate: step 3/5.</text>
</comment>
<comment type="subunit">
    <text evidence="1">Monomer.</text>
</comment>
<comment type="similarity">
    <text evidence="1">Belongs to the BPG-independent phosphoglycerate mutase family.</text>
</comment>
<keyword id="KW-0324">Glycolysis</keyword>
<keyword id="KW-0413">Isomerase</keyword>
<keyword id="KW-0464">Manganese</keyword>
<keyword id="KW-0479">Metal-binding</keyword>
<keyword id="KW-1185">Reference proteome</keyword>
<evidence type="ECO:0000255" key="1">
    <source>
        <dbReference type="HAMAP-Rule" id="MF_01038"/>
    </source>
</evidence>
<protein>
    <recommendedName>
        <fullName evidence="1">2,3-bisphosphoglycerate-independent phosphoglycerate mutase</fullName>
        <shortName evidence="1">BPG-independent PGAM</shortName>
        <shortName evidence="1">Phosphoglyceromutase</shortName>
        <shortName evidence="1">iPGM</shortName>
        <ecNumber evidence="1">5.4.2.12</ecNumber>
    </recommendedName>
</protein>
<feature type="chain" id="PRO_1000063955" description="2,3-bisphosphoglycerate-independent phosphoglycerate mutase">
    <location>
        <begin position="1"/>
        <end position="510"/>
    </location>
</feature>
<feature type="active site" description="Phosphoserine intermediate" evidence="1">
    <location>
        <position position="62"/>
    </location>
</feature>
<feature type="binding site" evidence="1">
    <location>
        <position position="12"/>
    </location>
    <ligand>
        <name>Mn(2+)</name>
        <dbReference type="ChEBI" id="CHEBI:29035"/>
        <label>2</label>
    </ligand>
</feature>
<feature type="binding site" evidence="1">
    <location>
        <position position="62"/>
    </location>
    <ligand>
        <name>Mn(2+)</name>
        <dbReference type="ChEBI" id="CHEBI:29035"/>
        <label>2</label>
    </ligand>
</feature>
<feature type="binding site" evidence="1">
    <location>
        <position position="121"/>
    </location>
    <ligand>
        <name>substrate</name>
    </ligand>
</feature>
<feature type="binding site" evidence="1">
    <location>
        <begin position="151"/>
        <end position="152"/>
    </location>
    <ligand>
        <name>substrate</name>
    </ligand>
</feature>
<feature type="binding site" evidence="1">
    <location>
        <position position="183"/>
    </location>
    <ligand>
        <name>substrate</name>
    </ligand>
</feature>
<feature type="binding site" evidence="1">
    <location>
        <position position="189"/>
    </location>
    <ligand>
        <name>substrate</name>
    </ligand>
</feature>
<feature type="binding site" evidence="1">
    <location>
        <begin position="258"/>
        <end position="261"/>
    </location>
    <ligand>
        <name>substrate</name>
    </ligand>
</feature>
<feature type="binding site" evidence="1">
    <location>
        <position position="331"/>
    </location>
    <ligand>
        <name>substrate</name>
    </ligand>
</feature>
<feature type="binding site" evidence="1">
    <location>
        <position position="398"/>
    </location>
    <ligand>
        <name>Mn(2+)</name>
        <dbReference type="ChEBI" id="CHEBI:29035"/>
        <label>1</label>
    </ligand>
</feature>
<feature type="binding site" evidence="1">
    <location>
        <position position="402"/>
    </location>
    <ligand>
        <name>Mn(2+)</name>
        <dbReference type="ChEBI" id="CHEBI:29035"/>
        <label>1</label>
    </ligand>
</feature>
<feature type="binding site" evidence="1">
    <location>
        <position position="439"/>
    </location>
    <ligand>
        <name>Mn(2+)</name>
        <dbReference type="ChEBI" id="CHEBI:29035"/>
        <label>2</label>
    </ligand>
</feature>
<feature type="binding site" evidence="1">
    <location>
        <position position="440"/>
    </location>
    <ligand>
        <name>Mn(2+)</name>
        <dbReference type="ChEBI" id="CHEBI:29035"/>
        <label>2</label>
    </ligand>
</feature>
<feature type="binding site" evidence="1">
    <location>
        <position position="458"/>
    </location>
    <ligand>
        <name>Mn(2+)</name>
        <dbReference type="ChEBI" id="CHEBI:29035"/>
        <label>1</label>
    </ligand>
</feature>
<organism>
    <name type="scientific">Clostridioides difficile (strain 630)</name>
    <name type="common">Peptoclostridium difficile</name>
    <dbReference type="NCBI Taxonomy" id="272563"/>
    <lineage>
        <taxon>Bacteria</taxon>
        <taxon>Bacillati</taxon>
        <taxon>Bacillota</taxon>
        <taxon>Clostridia</taxon>
        <taxon>Peptostreptococcales</taxon>
        <taxon>Peptostreptococcaceae</taxon>
        <taxon>Clostridioides</taxon>
    </lineage>
</organism>
<reference key="1">
    <citation type="journal article" date="2006" name="Nat. Genet.">
        <title>The multidrug-resistant human pathogen Clostridium difficile has a highly mobile, mosaic genome.</title>
        <authorList>
            <person name="Sebaihia M."/>
            <person name="Wren B.W."/>
            <person name="Mullany P."/>
            <person name="Fairweather N.F."/>
            <person name="Minton N."/>
            <person name="Stabler R."/>
            <person name="Thomson N.R."/>
            <person name="Roberts A.P."/>
            <person name="Cerdeno-Tarraga A.M."/>
            <person name="Wang H."/>
            <person name="Holden M.T.G."/>
            <person name="Wright A."/>
            <person name="Churcher C."/>
            <person name="Quail M.A."/>
            <person name="Baker S."/>
            <person name="Bason N."/>
            <person name="Brooks K."/>
            <person name="Chillingworth T."/>
            <person name="Cronin A."/>
            <person name="Davis P."/>
            <person name="Dowd L."/>
            <person name="Fraser A."/>
            <person name="Feltwell T."/>
            <person name="Hance Z."/>
            <person name="Holroyd S."/>
            <person name="Jagels K."/>
            <person name="Moule S."/>
            <person name="Mungall K."/>
            <person name="Price C."/>
            <person name="Rabbinowitsch E."/>
            <person name="Sharp S."/>
            <person name="Simmonds M."/>
            <person name="Stevens K."/>
            <person name="Unwin L."/>
            <person name="Whithead S."/>
            <person name="Dupuy B."/>
            <person name="Dougan G."/>
            <person name="Barrell B."/>
            <person name="Parkhill J."/>
        </authorList>
    </citation>
    <scope>NUCLEOTIDE SEQUENCE [LARGE SCALE GENOMIC DNA]</scope>
    <source>
        <strain>630</strain>
    </source>
</reference>
<proteinExistence type="inferred from homology"/>
<name>GPMI_CLOD6</name>
<gene>
    <name evidence="1" type="primary">gpmI</name>
    <name type="ordered locus">CD630_31710</name>
</gene>
<accession>Q181T7</accession>
<dbReference type="EC" id="5.4.2.12" evidence="1"/>
<dbReference type="EMBL" id="AM180355">
    <property type="protein sequence ID" value="CAJ70068.1"/>
    <property type="molecule type" value="Genomic_DNA"/>
</dbReference>
<dbReference type="RefSeq" id="YP_001089688.1">
    <property type="nucleotide sequence ID" value="NC_009089.1"/>
</dbReference>
<dbReference type="SMR" id="Q181T7"/>
<dbReference type="STRING" id="272563.CD630_31710"/>
<dbReference type="EnsemblBacteria" id="CAJ70068">
    <property type="protein sequence ID" value="CAJ70068"/>
    <property type="gene ID" value="CD630_31710"/>
</dbReference>
<dbReference type="KEGG" id="cdf:CD630_31710"/>
<dbReference type="PATRIC" id="fig|272563.8.peg.3322"/>
<dbReference type="eggNOG" id="COG0696">
    <property type="taxonomic scope" value="Bacteria"/>
</dbReference>
<dbReference type="OrthoDB" id="9800863at2"/>
<dbReference type="PhylomeDB" id="Q181T7"/>
<dbReference type="BioCyc" id="PDIF272563:G12WB-3337-MONOMER"/>
<dbReference type="UniPathway" id="UPA00109">
    <property type="reaction ID" value="UER00186"/>
</dbReference>
<dbReference type="Proteomes" id="UP000001978">
    <property type="component" value="Chromosome"/>
</dbReference>
<dbReference type="GO" id="GO:0005829">
    <property type="term" value="C:cytosol"/>
    <property type="evidence" value="ECO:0007669"/>
    <property type="project" value="TreeGrafter"/>
</dbReference>
<dbReference type="GO" id="GO:0030145">
    <property type="term" value="F:manganese ion binding"/>
    <property type="evidence" value="ECO:0007669"/>
    <property type="project" value="UniProtKB-UniRule"/>
</dbReference>
<dbReference type="GO" id="GO:0004619">
    <property type="term" value="F:phosphoglycerate mutase activity"/>
    <property type="evidence" value="ECO:0007669"/>
    <property type="project" value="UniProtKB-EC"/>
</dbReference>
<dbReference type="GO" id="GO:0006007">
    <property type="term" value="P:glucose catabolic process"/>
    <property type="evidence" value="ECO:0007669"/>
    <property type="project" value="InterPro"/>
</dbReference>
<dbReference type="GO" id="GO:0006096">
    <property type="term" value="P:glycolytic process"/>
    <property type="evidence" value="ECO:0007669"/>
    <property type="project" value="UniProtKB-UniRule"/>
</dbReference>
<dbReference type="CDD" id="cd16010">
    <property type="entry name" value="iPGM"/>
    <property type="match status" value="1"/>
</dbReference>
<dbReference type="FunFam" id="3.40.1450.10:FF:000001">
    <property type="entry name" value="2,3-bisphosphoglycerate-independent phosphoglycerate mutase"/>
    <property type="match status" value="1"/>
</dbReference>
<dbReference type="Gene3D" id="3.40.720.10">
    <property type="entry name" value="Alkaline Phosphatase, subunit A"/>
    <property type="match status" value="1"/>
</dbReference>
<dbReference type="Gene3D" id="3.40.1450.10">
    <property type="entry name" value="BPG-independent phosphoglycerate mutase, domain B"/>
    <property type="match status" value="1"/>
</dbReference>
<dbReference type="HAMAP" id="MF_01038">
    <property type="entry name" value="GpmI"/>
    <property type="match status" value="1"/>
</dbReference>
<dbReference type="InterPro" id="IPR017850">
    <property type="entry name" value="Alkaline_phosphatase_core_sf"/>
</dbReference>
<dbReference type="InterPro" id="IPR011258">
    <property type="entry name" value="BPG-indep_PGM_N"/>
</dbReference>
<dbReference type="InterPro" id="IPR006124">
    <property type="entry name" value="Metalloenzyme"/>
</dbReference>
<dbReference type="InterPro" id="IPR036646">
    <property type="entry name" value="PGAM_B_sf"/>
</dbReference>
<dbReference type="InterPro" id="IPR005995">
    <property type="entry name" value="Pgm_bpd_ind"/>
</dbReference>
<dbReference type="NCBIfam" id="TIGR01307">
    <property type="entry name" value="pgm_bpd_ind"/>
    <property type="match status" value="1"/>
</dbReference>
<dbReference type="PANTHER" id="PTHR31637">
    <property type="entry name" value="2,3-BISPHOSPHOGLYCERATE-INDEPENDENT PHOSPHOGLYCERATE MUTASE"/>
    <property type="match status" value="1"/>
</dbReference>
<dbReference type="PANTHER" id="PTHR31637:SF0">
    <property type="entry name" value="2,3-BISPHOSPHOGLYCERATE-INDEPENDENT PHOSPHOGLYCERATE MUTASE"/>
    <property type="match status" value="1"/>
</dbReference>
<dbReference type="Pfam" id="PF06415">
    <property type="entry name" value="iPGM_N"/>
    <property type="match status" value="1"/>
</dbReference>
<dbReference type="Pfam" id="PF01676">
    <property type="entry name" value="Metalloenzyme"/>
    <property type="match status" value="1"/>
</dbReference>
<dbReference type="PIRSF" id="PIRSF001492">
    <property type="entry name" value="IPGAM"/>
    <property type="match status" value="1"/>
</dbReference>
<dbReference type="SUPFAM" id="SSF64158">
    <property type="entry name" value="2,3-Bisphosphoglycerate-independent phosphoglycerate mutase, substrate-binding domain"/>
    <property type="match status" value="1"/>
</dbReference>
<dbReference type="SUPFAM" id="SSF53649">
    <property type="entry name" value="Alkaline phosphatase-like"/>
    <property type="match status" value="1"/>
</dbReference>
<sequence length="510" mass="56374">MMKKPVALIIMDGFGYNKDVKGNAIAESKTPNLDRIKKEYPNTLINASGLDVGLPDGQMGNSEVGHTNIGAGRIVYQDLTRITKSIKDGDFFTNKVLCEAMDNAKENSLHVMGLLSDGGVHSHIDHLKAIIKMAKDKGVQKVYVHAFTDGRDTDPQSALEYAKEVQASMDEIGVGEFATVSGRYYAMDRDKRWERVELAYNAMVRGIGEKANSIEEAIQNSYDDGKNDEFIMPTVIMKDDKPVGSIKENDSIIFFNFRPDRARQITRALVCEEFDGFKREDIKNFFVCLTEYDITIENVHIAFGPQSLANTLGEYLAKNGKTQLRAAETEKYAHVTFFFNGGVEEPNKGEERLLIPSPKVATYDLKPEMSAYELTDKALDKLGEDKFDFIVLNFANPDMVGHTGSIEAAIKAVETVDTCVGKLIDKIVELGGSAIITADHGNAEYMLDPETGKTVTAHSINPVPFIVVGQEYESAKLLDGGRLSDIAPTILDMMKLEKPEEMTGHSLISK</sequence>